<proteinExistence type="inferred from homology"/>
<feature type="chain" id="PRO_0000077168" description="Large ribosomal subunit protein uL3">
    <location>
        <begin position="1"/>
        <end position="208"/>
    </location>
</feature>
<feature type="region of interest" description="Disordered" evidence="2">
    <location>
        <begin position="116"/>
        <end position="148"/>
    </location>
</feature>
<protein>
    <recommendedName>
        <fullName evidence="1">Large ribosomal subunit protein uL3</fullName>
    </recommendedName>
    <alternativeName>
        <fullName evidence="3">50S ribosomal protein L3</fullName>
    </alternativeName>
</protein>
<name>RL3_STRPN</name>
<organism>
    <name type="scientific">Streptococcus pneumoniae serotype 4 (strain ATCC BAA-334 / TIGR4)</name>
    <dbReference type="NCBI Taxonomy" id="170187"/>
    <lineage>
        <taxon>Bacteria</taxon>
        <taxon>Bacillati</taxon>
        <taxon>Bacillota</taxon>
        <taxon>Bacilli</taxon>
        <taxon>Lactobacillales</taxon>
        <taxon>Streptococcaceae</taxon>
        <taxon>Streptococcus</taxon>
    </lineage>
</organism>
<accession>Q97SV5</accession>
<sequence>MTKGILGKKVGMTQIFTEAGELIPVTVIEATPNVVLQVKTVETDGYNAIQVGFDDKREVLSNKPAKGHVAKANTAPKRFIREFKNVEGLEVGAEITVETFAAGDVVDVTGTSKGKGFQGVIKRHGQSRGPMAHGSRYHRRPGSMGPVAPNRVFKGKNLAGRMGGDRVTIQNLEVVQVVPEKNVILIKGNVPGAKKSLITIKSAVKAGK</sequence>
<evidence type="ECO:0000255" key="1">
    <source>
        <dbReference type="HAMAP-Rule" id="MF_01325"/>
    </source>
</evidence>
<evidence type="ECO:0000256" key="2">
    <source>
        <dbReference type="SAM" id="MobiDB-lite"/>
    </source>
</evidence>
<evidence type="ECO:0000305" key="3"/>
<reference key="1">
    <citation type="journal article" date="2001" name="Science">
        <title>Complete genome sequence of a virulent isolate of Streptococcus pneumoniae.</title>
        <authorList>
            <person name="Tettelin H."/>
            <person name="Nelson K.E."/>
            <person name="Paulsen I.T."/>
            <person name="Eisen J.A."/>
            <person name="Read T.D."/>
            <person name="Peterson S.N."/>
            <person name="Heidelberg J.F."/>
            <person name="DeBoy R.T."/>
            <person name="Haft D.H."/>
            <person name="Dodson R.J."/>
            <person name="Durkin A.S."/>
            <person name="Gwinn M.L."/>
            <person name="Kolonay J.F."/>
            <person name="Nelson W.C."/>
            <person name="Peterson J.D."/>
            <person name="Umayam L.A."/>
            <person name="White O."/>
            <person name="Salzberg S.L."/>
            <person name="Lewis M.R."/>
            <person name="Radune D."/>
            <person name="Holtzapple E.K."/>
            <person name="Khouri H.M."/>
            <person name="Wolf A.M."/>
            <person name="Utterback T.R."/>
            <person name="Hansen C.L."/>
            <person name="McDonald L.A."/>
            <person name="Feldblyum T.V."/>
            <person name="Angiuoli S.V."/>
            <person name="Dickinson T."/>
            <person name="Hickey E.K."/>
            <person name="Holt I.E."/>
            <person name="Loftus B.J."/>
            <person name="Yang F."/>
            <person name="Smith H.O."/>
            <person name="Venter J.C."/>
            <person name="Dougherty B.A."/>
            <person name="Morrison D.A."/>
            <person name="Hollingshead S.K."/>
            <person name="Fraser C.M."/>
        </authorList>
    </citation>
    <scope>NUCLEOTIDE SEQUENCE [LARGE SCALE GENOMIC DNA]</scope>
    <source>
        <strain>ATCC BAA-334 / TIGR4</strain>
    </source>
</reference>
<comment type="function">
    <text evidence="1">One of the primary rRNA binding proteins, it binds directly near the 3'-end of the 23S rRNA, where it nucleates assembly of the 50S subunit.</text>
</comment>
<comment type="subunit">
    <text evidence="1">Part of the 50S ribosomal subunit. Forms a cluster with proteins L14 and L19.</text>
</comment>
<comment type="similarity">
    <text evidence="1">Belongs to the universal ribosomal protein uL3 family.</text>
</comment>
<gene>
    <name evidence="1" type="primary">rplC</name>
    <name type="ordered locus">SP_0209</name>
</gene>
<keyword id="KW-1185">Reference proteome</keyword>
<keyword id="KW-0687">Ribonucleoprotein</keyword>
<keyword id="KW-0689">Ribosomal protein</keyword>
<keyword id="KW-0694">RNA-binding</keyword>
<keyword id="KW-0699">rRNA-binding</keyword>
<dbReference type="EMBL" id="AE005672">
    <property type="protein sequence ID" value="AAK74389.1"/>
    <property type="molecule type" value="Genomic_DNA"/>
</dbReference>
<dbReference type="PIR" id="D95024">
    <property type="entry name" value="D95024"/>
</dbReference>
<dbReference type="PIR" id="D97895">
    <property type="entry name" value="D97895"/>
</dbReference>
<dbReference type="RefSeq" id="WP_000160197.1">
    <property type="nucleotide sequence ID" value="NZ_CP155539.1"/>
</dbReference>
<dbReference type="SMR" id="Q97SV5"/>
<dbReference type="PaxDb" id="170187-SP_0209"/>
<dbReference type="EnsemblBacteria" id="AAK74389">
    <property type="protein sequence ID" value="AAK74389"/>
    <property type="gene ID" value="SP_0209"/>
</dbReference>
<dbReference type="GeneID" id="93738957"/>
<dbReference type="KEGG" id="spn:SP_0209"/>
<dbReference type="eggNOG" id="COG0087">
    <property type="taxonomic scope" value="Bacteria"/>
</dbReference>
<dbReference type="PhylomeDB" id="Q97SV5"/>
<dbReference type="BioCyc" id="SPNE170187:G1FZB-214-MONOMER"/>
<dbReference type="Proteomes" id="UP000000585">
    <property type="component" value="Chromosome"/>
</dbReference>
<dbReference type="GO" id="GO:0022625">
    <property type="term" value="C:cytosolic large ribosomal subunit"/>
    <property type="evidence" value="ECO:0007669"/>
    <property type="project" value="TreeGrafter"/>
</dbReference>
<dbReference type="GO" id="GO:0019843">
    <property type="term" value="F:rRNA binding"/>
    <property type="evidence" value="ECO:0007669"/>
    <property type="project" value="UniProtKB-UniRule"/>
</dbReference>
<dbReference type="GO" id="GO:0003735">
    <property type="term" value="F:structural constituent of ribosome"/>
    <property type="evidence" value="ECO:0007669"/>
    <property type="project" value="InterPro"/>
</dbReference>
<dbReference type="GO" id="GO:0006412">
    <property type="term" value="P:translation"/>
    <property type="evidence" value="ECO:0007669"/>
    <property type="project" value="UniProtKB-UniRule"/>
</dbReference>
<dbReference type="FunFam" id="2.40.30.10:FF:000004">
    <property type="entry name" value="50S ribosomal protein L3"/>
    <property type="match status" value="1"/>
</dbReference>
<dbReference type="FunFam" id="3.30.160.810:FF:000002">
    <property type="entry name" value="50S ribosomal protein L3"/>
    <property type="match status" value="1"/>
</dbReference>
<dbReference type="Gene3D" id="3.30.160.810">
    <property type="match status" value="1"/>
</dbReference>
<dbReference type="Gene3D" id="2.40.30.10">
    <property type="entry name" value="Translation factors"/>
    <property type="match status" value="1"/>
</dbReference>
<dbReference type="HAMAP" id="MF_01325_B">
    <property type="entry name" value="Ribosomal_uL3_B"/>
    <property type="match status" value="1"/>
</dbReference>
<dbReference type="InterPro" id="IPR000597">
    <property type="entry name" value="Ribosomal_uL3"/>
</dbReference>
<dbReference type="InterPro" id="IPR019927">
    <property type="entry name" value="Ribosomal_uL3_bac/org-type"/>
</dbReference>
<dbReference type="InterPro" id="IPR019926">
    <property type="entry name" value="Ribosomal_uL3_CS"/>
</dbReference>
<dbReference type="InterPro" id="IPR009000">
    <property type="entry name" value="Transl_B-barrel_sf"/>
</dbReference>
<dbReference type="NCBIfam" id="TIGR03625">
    <property type="entry name" value="L3_bact"/>
    <property type="match status" value="1"/>
</dbReference>
<dbReference type="PANTHER" id="PTHR11229">
    <property type="entry name" value="50S RIBOSOMAL PROTEIN L3"/>
    <property type="match status" value="1"/>
</dbReference>
<dbReference type="PANTHER" id="PTHR11229:SF16">
    <property type="entry name" value="LARGE RIBOSOMAL SUBUNIT PROTEIN UL3C"/>
    <property type="match status" value="1"/>
</dbReference>
<dbReference type="Pfam" id="PF00297">
    <property type="entry name" value="Ribosomal_L3"/>
    <property type="match status" value="1"/>
</dbReference>
<dbReference type="SUPFAM" id="SSF50447">
    <property type="entry name" value="Translation proteins"/>
    <property type="match status" value="1"/>
</dbReference>
<dbReference type="PROSITE" id="PS00474">
    <property type="entry name" value="RIBOSOMAL_L3"/>
    <property type="match status" value="1"/>
</dbReference>